<protein>
    <recommendedName>
        <fullName>Melanoma-associated antigen D2</fullName>
    </recommendedName>
    <alternativeName>
        <fullName>11B6</fullName>
    </alternativeName>
    <alternativeName>
        <fullName>Breast cancer-associated gene 1 protein</fullName>
        <shortName>BCG-1</shortName>
    </alternativeName>
    <alternativeName>
        <fullName>Hepatocellular carcinoma-associated protein JCL-1</fullName>
    </alternativeName>
    <alternativeName>
        <fullName>MAGE-D2 antigen</fullName>
    </alternativeName>
</protein>
<gene>
    <name type="primary">MAGED2</name>
    <name type="synonym">BCG1</name>
</gene>
<sequence length="606" mass="64954">MSDTSESGAGLTRFQAEASEKDSSSMMQTLLTVTQNVEVPETPKASKALEVSEDVKVSKASGVSKATEVSKTPEAREAPATQASSTTQLTDTQVLAAENKSLAADTKKQNADPQAVTMPATETKKVSHVADTKVNTKAQETEAAPSQAPADEPEPESAAAQSQENQDTRPKVKAKKARKVKHLDGEEDGSSDQSQASGTTGGRRVSKALMASMARRASRGPIAFWARRASRTRLAAWARRALLSLRSPKARRGKARRRAAKLQSSQEPEAPPPRDVALLQGRANDLVKYLLAKDQTKIPIKRSDMLKDIIKEYTDVYPEIIERAGYSLEKVFGIQLKEIDKNDHLYILLSTLEPTDAGILGTTKDSPKLGLLMVLLSIIFMNGNRSSEAVIWEVLRKLGLRPGIHHSLFGDVKKLITDEFVKQKYLDYARVPNSNPPEYEFFWGLRSYYETSKMKVLKFACKVQKKDPKEWAAQYREAMEADLKAAAEAAAEAKARAEIRARMGIGLGSENAAGPCNWDEADIGPWAKARIQAGAEAKAKAQESGSASTGASTSTNNSASASASTSGGFSAGASLTATLTFGLFAGLGGAGASTSGSSGACGFSYK</sequence>
<evidence type="ECO:0000255" key="1">
    <source>
        <dbReference type="PROSITE-ProRule" id="PRU00127"/>
    </source>
</evidence>
<evidence type="ECO:0000256" key="2">
    <source>
        <dbReference type="SAM" id="MobiDB-lite"/>
    </source>
</evidence>
<evidence type="ECO:0000269" key="3">
    <source>
    </source>
</evidence>
<evidence type="ECO:0000269" key="4">
    <source>
    </source>
</evidence>
<evidence type="ECO:0000269" key="5">
    <source>
    </source>
</evidence>
<evidence type="ECO:0000269" key="6">
    <source>
    </source>
</evidence>
<evidence type="ECO:0000269" key="7">
    <source ref="9"/>
</evidence>
<evidence type="ECO:0000303" key="8">
    <source>
    </source>
</evidence>
<evidence type="ECO:0000305" key="9"/>
<evidence type="ECO:0007744" key="10">
    <source>
    </source>
</evidence>
<evidence type="ECO:0007744" key="11">
    <source>
    </source>
</evidence>
<evidence type="ECO:0007744" key="12">
    <source>
    </source>
</evidence>
<evidence type="ECO:0007744" key="13">
    <source>
    </source>
</evidence>
<evidence type="ECO:0007744" key="14">
    <source>
    </source>
</evidence>
<evidence type="ECO:0007744" key="15">
    <source>
    </source>
</evidence>
<evidence type="ECO:0007744" key="16">
    <source>
    </source>
</evidence>
<evidence type="ECO:0007744" key="17">
    <source>
    </source>
</evidence>
<evidence type="ECO:0007744" key="18">
    <source>
    </source>
</evidence>
<evidence type="ECO:0007744" key="19">
    <source>
    </source>
</evidence>
<evidence type="ECO:0007744" key="20">
    <source>
    </source>
</evidence>
<evidence type="ECO:0007744" key="21">
    <source>
    </source>
</evidence>
<evidence type="ECO:0007744" key="22">
    <source>
    </source>
</evidence>
<dbReference type="EMBL" id="AF128527">
    <property type="protein sequence ID" value="AAD33392.1"/>
    <property type="molecule type" value="mRNA"/>
</dbReference>
<dbReference type="EMBL" id="AF128528">
    <property type="protein sequence ID" value="AAD33393.1"/>
    <property type="molecule type" value="mRNA"/>
</dbReference>
<dbReference type="EMBL" id="AF126181">
    <property type="protein sequence ID" value="AAD28598.1"/>
    <property type="molecule type" value="mRNA"/>
</dbReference>
<dbReference type="EMBL" id="AJ293618">
    <property type="protein sequence ID" value="CAC19410.1"/>
    <property type="molecule type" value="mRNA"/>
</dbReference>
<dbReference type="EMBL" id="U92544">
    <property type="protein sequence ID" value="AAD00728.1"/>
    <property type="molecule type" value="mRNA"/>
</dbReference>
<dbReference type="EMBL" id="AF320070">
    <property type="protein sequence ID" value="AAG35066.2"/>
    <property type="molecule type" value="mRNA"/>
</dbReference>
<dbReference type="EMBL" id="AK092463">
    <property type="protein sequence ID" value="BAC03896.1"/>
    <property type="molecule type" value="mRNA"/>
</dbReference>
<dbReference type="EMBL" id="Z98046">
    <property type="status" value="NOT_ANNOTATED_CDS"/>
    <property type="molecule type" value="Genomic_DNA"/>
</dbReference>
<dbReference type="EMBL" id="CH471154">
    <property type="protein sequence ID" value="EAW93189.1"/>
    <property type="molecule type" value="Genomic_DNA"/>
</dbReference>
<dbReference type="EMBL" id="BC000304">
    <property type="protein sequence ID" value="AAH00304.1"/>
    <property type="molecule type" value="mRNA"/>
</dbReference>
<dbReference type="EMBL" id="BC091503">
    <property type="protein sequence ID" value="AAH91503.1"/>
    <property type="molecule type" value="mRNA"/>
</dbReference>
<dbReference type="EMBL" id="AF148815">
    <property type="protein sequence ID" value="AAF73137.1"/>
    <property type="molecule type" value="mRNA"/>
</dbReference>
<dbReference type="EMBL" id="AF320907">
    <property type="protein sequence ID" value="AAG38603.1"/>
    <property type="molecule type" value="mRNA"/>
</dbReference>
<dbReference type="CCDS" id="CCDS14362.1">
    <molecule id="Q9UNF1-1"/>
</dbReference>
<dbReference type="RefSeq" id="NP_055414.2">
    <molecule id="Q9UNF1-1"/>
    <property type="nucleotide sequence ID" value="NM_014599.5"/>
</dbReference>
<dbReference type="RefSeq" id="NP_803182.1">
    <molecule id="Q9UNF1-1"/>
    <property type="nucleotide sequence ID" value="NM_177433.3"/>
</dbReference>
<dbReference type="RefSeq" id="NP_957516.1">
    <molecule id="Q9UNF1-1"/>
    <property type="nucleotide sequence ID" value="NM_201222.3"/>
</dbReference>
<dbReference type="SMR" id="Q9UNF1"/>
<dbReference type="BioGRID" id="116121">
    <property type="interactions" value="269"/>
</dbReference>
<dbReference type="DIP" id="DIP-50722N"/>
<dbReference type="FunCoup" id="Q9UNF1">
    <property type="interactions" value="163"/>
</dbReference>
<dbReference type="IntAct" id="Q9UNF1">
    <property type="interactions" value="107"/>
</dbReference>
<dbReference type="MINT" id="Q9UNF1"/>
<dbReference type="STRING" id="9606.ENSP00000364193"/>
<dbReference type="GlyGen" id="Q9UNF1">
    <property type="glycosylation" value="9 sites, 2 O-linked glycans (9 sites)"/>
</dbReference>
<dbReference type="iPTMnet" id="Q9UNF1"/>
<dbReference type="MetOSite" id="Q9UNF1"/>
<dbReference type="PhosphoSitePlus" id="Q9UNF1"/>
<dbReference type="SwissPalm" id="Q9UNF1"/>
<dbReference type="BioMuta" id="MAGED2"/>
<dbReference type="DMDM" id="17380153"/>
<dbReference type="jPOST" id="Q9UNF1"/>
<dbReference type="MassIVE" id="Q9UNF1"/>
<dbReference type="PaxDb" id="9606-ENSP00000364209"/>
<dbReference type="PeptideAtlas" id="Q9UNF1"/>
<dbReference type="ProteomicsDB" id="85286">
    <molecule id="Q9UNF1-1"/>
</dbReference>
<dbReference type="ProteomicsDB" id="85287">
    <molecule id="Q9UNF1-2"/>
</dbReference>
<dbReference type="Pumba" id="Q9UNF1"/>
<dbReference type="Antibodypedia" id="26825">
    <property type="antibodies" value="217 antibodies from 28 providers"/>
</dbReference>
<dbReference type="DNASU" id="10916"/>
<dbReference type="Ensembl" id="ENST00000218439.8">
    <molecule id="Q9UNF1-1"/>
    <property type="protein sequence ID" value="ENSP00000218439.4"/>
    <property type="gene ID" value="ENSG00000102316.17"/>
</dbReference>
<dbReference type="Ensembl" id="ENST00000375053.6">
    <molecule id="Q9UNF1-1"/>
    <property type="protein sequence ID" value="ENSP00000364193.2"/>
    <property type="gene ID" value="ENSG00000102316.17"/>
</dbReference>
<dbReference type="Ensembl" id="ENST00000375058.5">
    <molecule id="Q9UNF1-1"/>
    <property type="protein sequence ID" value="ENSP00000364198.1"/>
    <property type="gene ID" value="ENSG00000102316.17"/>
</dbReference>
<dbReference type="Ensembl" id="ENST00000375068.6">
    <molecule id="Q9UNF1-1"/>
    <property type="protein sequence ID" value="ENSP00000364209.1"/>
    <property type="gene ID" value="ENSG00000102316.17"/>
</dbReference>
<dbReference type="Ensembl" id="ENST00000396224.1">
    <molecule id="Q9UNF1-1"/>
    <property type="protein sequence ID" value="ENSP00000379526.1"/>
    <property type="gene ID" value="ENSG00000102316.17"/>
</dbReference>
<dbReference type="GeneID" id="10916"/>
<dbReference type="KEGG" id="hsa:10916"/>
<dbReference type="MANE-Select" id="ENST00000375068.6">
    <property type="protein sequence ID" value="ENSP00000364209.1"/>
    <property type="RefSeq nucleotide sequence ID" value="NM_177433.3"/>
    <property type="RefSeq protein sequence ID" value="NP_803182.1"/>
</dbReference>
<dbReference type="UCSC" id="uc004dtk.3">
    <molecule id="Q9UNF1-1"/>
    <property type="organism name" value="human"/>
</dbReference>
<dbReference type="AGR" id="HGNC:16353"/>
<dbReference type="CTD" id="10916"/>
<dbReference type="DisGeNET" id="10916"/>
<dbReference type="GeneCards" id="MAGED2"/>
<dbReference type="HGNC" id="HGNC:16353">
    <property type="gene designation" value="MAGED2"/>
</dbReference>
<dbReference type="HPA" id="ENSG00000102316">
    <property type="expression patterns" value="Low tissue specificity"/>
</dbReference>
<dbReference type="MalaCards" id="MAGED2"/>
<dbReference type="MIM" id="300470">
    <property type="type" value="gene"/>
</dbReference>
<dbReference type="MIM" id="300971">
    <property type="type" value="phenotype"/>
</dbReference>
<dbReference type="neXtProt" id="NX_Q9UNF1"/>
<dbReference type="OpenTargets" id="ENSG00000102316"/>
<dbReference type="Orphanet" id="570371">
    <property type="disease" value="Bartter syndrome type 5"/>
</dbReference>
<dbReference type="PharmGKB" id="PA30560"/>
<dbReference type="VEuPathDB" id="HostDB:ENSG00000102316"/>
<dbReference type="eggNOG" id="KOG4562">
    <property type="taxonomic scope" value="Eukaryota"/>
</dbReference>
<dbReference type="GeneTree" id="ENSGT00940000161795"/>
<dbReference type="InParanoid" id="Q9UNF1"/>
<dbReference type="OMA" id="DKSDHLY"/>
<dbReference type="OrthoDB" id="205198at2759"/>
<dbReference type="PAN-GO" id="Q9UNF1">
    <property type="GO annotations" value="2 GO annotations based on evolutionary models"/>
</dbReference>
<dbReference type="PhylomeDB" id="Q9UNF1"/>
<dbReference type="TreeFam" id="TF352132"/>
<dbReference type="PathwayCommons" id="Q9UNF1"/>
<dbReference type="Reactome" id="R-HSA-114608">
    <property type="pathway name" value="Platelet degranulation"/>
</dbReference>
<dbReference type="SignaLink" id="Q9UNF1"/>
<dbReference type="BioGRID-ORCS" id="10916">
    <property type="hits" value="10 hits in 785 CRISPR screens"/>
</dbReference>
<dbReference type="CD-CODE" id="DEE660B4">
    <property type="entry name" value="Stress granule"/>
</dbReference>
<dbReference type="ChiTaRS" id="MAGED2">
    <property type="organism name" value="human"/>
</dbReference>
<dbReference type="GeneWiki" id="MAGED2"/>
<dbReference type="GenomeRNAi" id="10916"/>
<dbReference type="Pharos" id="Q9UNF1">
    <property type="development level" value="Tbio"/>
</dbReference>
<dbReference type="PRO" id="PR:Q9UNF1"/>
<dbReference type="Proteomes" id="UP000005640">
    <property type="component" value="Chromosome X"/>
</dbReference>
<dbReference type="RNAct" id="Q9UNF1">
    <property type="molecule type" value="protein"/>
</dbReference>
<dbReference type="Bgee" id="ENSG00000102316">
    <property type="expression patterns" value="Expressed in adenohypophysis and 204 other cell types or tissues"/>
</dbReference>
<dbReference type="ExpressionAtlas" id="Q9UNF1">
    <property type="expression patterns" value="baseline and differential"/>
</dbReference>
<dbReference type="GO" id="GO:0005829">
    <property type="term" value="C:cytosol"/>
    <property type="evidence" value="ECO:0000314"/>
    <property type="project" value="HPA"/>
</dbReference>
<dbReference type="GO" id="GO:0005576">
    <property type="term" value="C:extracellular region"/>
    <property type="evidence" value="ECO:0000304"/>
    <property type="project" value="Reactome"/>
</dbReference>
<dbReference type="GO" id="GO:0016020">
    <property type="term" value="C:membrane"/>
    <property type="evidence" value="ECO:0007005"/>
    <property type="project" value="UniProtKB"/>
</dbReference>
<dbReference type="GO" id="GO:0005730">
    <property type="term" value="C:nucleolus"/>
    <property type="evidence" value="ECO:0000314"/>
    <property type="project" value="HPA"/>
</dbReference>
<dbReference type="GO" id="GO:0005654">
    <property type="term" value="C:nucleoplasm"/>
    <property type="evidence" value="ECO:0000314"/>
    <property type="project" value="HPA"/>
</dbReference>
<dbReference type="GO" id="GO:0005634">
    <property type="term" value="C:nucleus"/>
    <property type="evidence" value="ECO:0000318"/>
    <property type="project" value="GO_Central"/>
</dbReference>
<dbReference type="GO" id="GO:0031093">
    <property type="term" value="C:platelet alpha granule lumen"/>
    <property type="evidence" value="ECO:0000304"/>
    <property type="project" value="Reactome"/>
</dbReference>
<dbReference type="GO" id="GO:0007565">
    <property type="term" value="P:female pregnancy"/>
    <property type="evidence" value="ECO:0000315"/>
    <property type="project" value="UniProtKB"/>
</dbReference>
<dbReference type="GO" id="GO:0000122">
    <property type="term" value="P:negative regulation of transcription by RNA polymerase II"/>
    <property type="evidence" value="ECO:0000318"/>
    <property type="project" value="GO_Central"/>
</dbReference>
<dbReference type="GO" id="GO:0070294">
    <property type="term" value="P:renal sodium ion absorption"/>
    <property type="evidence" value="ECO:0000315"/>
    <property type="project" value="UniProtKB"/>
</dbReference>
<dbReference type="FunFam" id="1.10.10.1200:FF:000001">
    <property type="entry name" value="Melanoma-associated antigen D1"/>
    <property type="match status" value="1"/>
</dbReference>
<dbReference type="FunFam" id="1.10.10.1210:FF:000001">
    <property type="entry name" value="melanoma-associated antigen D1"/>
    <property type="match status" value="1"/>
</dbReference>
<dbReference type="Gene3D" id="1.10.10.1200">
    <property type="entry name" value="MAGE homology domain, winged helix WH1 motif"/>
    <property type="match status" value="1"/>
</dbReference>
<dbReference type="Gene3D" id="1.10.10.1210">
    <property type="entry name" value="MAGE homology domain, winged helix WH2 motif"/>
    <property type="match status" value="1"/>
</dbReference>
<dbReference type="InterPro" id="IPR037445">
    <property type="entry name" value="MAGE"/>
</dbReference>
<dbReference type="InterPro" id="IPR041898">
    <property type="entry name" value="MAGE_WH1"/>
</dbReference>
<dbReference type="InterPro" id="IPR041899">
    <property type="entry name" value="MAGE_WH2"/>
</dbReference>
<dbReference type="InterPro" id="IPR002190">
    <property type="entry name" value="MHD_dom"/>
</dbReference>
<dbReference type="PANTHER" id="PTHR11736:SF11">
    <property type="entry name" value="MELANOMA-ASSOCIATED ANTIGEN D2"/>
    <property type="match status" value="1"/>
</dbReference>
<dbReference type="PANTHER" id="PTHR11736">
    <property type="entry name" value="MELANOMA-ASSOCIATED ANTIGEN MAGE ANTIGEN"/>
    <property type="match status" value="1"/>
</dbReference>
<dbReference type="Pfam" id="PF01454">
    <property type="entry name" value="MAGE"/>
    <property type="match status" value="1"/>
</dbReference>
<dbReference type="SMART" id="SM01373">
    <property type="entry name" value="MAGE"/>
    <property type="match status" value="1"/>
</dbReference>
<dbReference type="PROSITE" id="PS50838">
    <property type="entry name" value="MAGE"/>
    <property type="match status" value="1"/>
</dbReference>
<accession>Q9UNF1</accession>
<accession>A6NMX0</accession>
<accession>O76058</accession>
<accession>Q5BJF3</accession>
<accession>Q8NAL6</accession>
<accession>Q9H218</accession>
<accession>Q9P0U9</accession>
<accession>Q9UM52</accession>
<proteinExistence type="evidence at protein level"/>
<name>MAGD2_HUMAN</name>
<reference key="1">
    <citation type="journal article" date="2000" name="Breast Cancer Res. Treat.">
        <title>Isolation of genes overexpressed in freshly isolated breast cancer specimens.</title>
        <authorList>
            <person name="Kurt R.A."/>
            <person name="Urba W.J."/>
            <person name="Schoof D.D."/>
        </authorList>
    </citation>
    <scope>NUCLEOTIDE SEQUENCE [MRNA] (ISOFORM 1)</scope>
    <scope>VARIANT ARG-266</scope>
    <source>
        <tissue>Fetal lung</tissue>
        <tissue>Mammary cancer</tissue>
        <tissue>Mammary gland</tissue>
    </source>
</reference>
<reference key="2">
    <citation type="journal article" date="2001" name="Cytogenet. Cell Genet.">
        <title>Expression pattern and further characterization of human MAGED2 and identification of rodent orthologues.</title>
        <authorList>
            <person name="Langnaese K."/>
            <person name="Kloos D.U."/>
            <person name="Wehnert M."/>
            <person name="Seidel B."/>
            <person name="Wieacker P."/>
        </authorList>
    </citation>
    <scope>NUCLEOTIDE SEQUENCE [MRNA] (ISOFORM 1)</scope>
</reference>
<reference key="3">
    <citation type="submission" date="1997-03" db="EMBL/GenBank/DDBJ databases">
        <title>Hepatocellular carcinoma associated gene JCL-1.</title>
        <authorList>
            <person name="Jin C.L."/>
            <person name="Wang D.Y."/>
            <person name="Wan D.F."/>
            <person name="Gu J.R."/>
        </authorList>
    </citation>
    <scope>NUCLEOTIDE SEQUENCE [MRNA] (ISOFORM 1)</scope>
</reference>
<reference key="4">
    <citation type="submission" date="2002-03" db="EMBL/GenBank/DDBJ databases">
        <title>Identification of genes which are differentially expressed in hepatocellular carcinoma by SSH method.</title>
        <authorList>
            <person name="Dong X.-Y."/>
            <person name="Chen W.-F."/>
        </authorList>
    </citation>
    <scope>NUCLEOTIDE SEQUENCE (ISOFORM 1)</scope>
</reference>
<reference key="5">
    <citation type="journal article" date="2004" name="Nat. Genet.">
        <title>Complete sequencing and characterization of 21,243 full-length human cDNAs.</title>
        <authorList>
            <person name="Ota T."/>
            <person name="Suzuki Y."/>
            <person name="Nishikawa T."/>
            <person name="Otsuki T."/>
            <person name="Sugiyama T."/>
            <person name="Irie R."/>
            <person name="Wakamatsu A."/>
            <person name="Hayashi K."/>
            <person name="Sato H."/>
            <person name="Nagai K."/>
            <person name="Kimura K."/>
            <person name="Makita H."/>
            <person name="Sekine M."/>
            <person name="Obayashi M."/>
            <person name="Nishi T."/>
            <person name="Shibahara T."/>
            <person name="Tanaka T."/>
            <person name="Ishii S."/>
            <person name="Yamamoto J."/>
            <person name="Saito K."/>
            <person name="Kawai Y."/>
            <person name="Isono Y."/>
            <person name="Nakamura Y."/>
            <person name="Nagahari K."/>
            <person name="Murakami K."/>
            <person name="Yasuda T."/>
            <person name="Iwayanagi T."/>
            <person name="Wagatsuma M."/>
            <person name="Shiratori A."/>
            <person name="Sudo H."/>
            <person name="Hosoiri T."/>
            <person name="Kaku Y."/>
            <person name="Kodaira H."/>
            <person name="Kondo H."/>
            <person name="Sugawara M."/>
            <person name="Takahashi M."/>
            <person name="Kanda K."/>
            <person name="Yokoi T."/>
            <person name="Furuya T."/>
            <person name="Kikkawa E."/>
            <person name="Omura Y."/>
            <person name="Abe K."/>
            <person name="Kamihara K."/>
            <person name="Katsuta N."/>
            <person name="Sato K."/>
            <person name="Tanikawa M."/>
            <person name="Yamazaki M."/>
            <person name="Ninomiya K."/>
            <person name="Ishibashi T."/>
            <person name="Yamashita H."/>
            <person name="Murakawa K."/>
            <person name="Fujimori K."/>
            <person name="Tanai H."/>
            <person name="Kimata M."/>
            <person name="Watanabe M."/>
            <person name="Hiraoka S."/>
            <person name="Chiba Y."/>
            <person name="Ishida S."/>
            <person name="Ono Y."/>
            <person name="Takiguchi S."/>
            <person name="Watanabe S."/>
            <person name="Yosida M."/>
            <person name="Hotuta T."/>
            <person name="Kusano J."/>
            <person name="Kanehori K."/>
            <person name="Takahashi-Fujii A."/>
            <person name="Hara H."/>
            <person name="Tanase T.-O."/>
            <person name="Nomura Y."/>
            <person name="Togiya S."/>
            <person name="Komai F."/>
            <person name="Hara R."/>
            <person name="Takeuchi K."/>
            <person name="Arita M."/>
            <person name="Imose N."/>
            <person name="Musashino K."/>
            <person name="Yuuki H."/>
            <person name="Oshima A."/>
            <person name="Sasaki N."/>
            <person name="Aotsuka S."/>
            <person name="Yoshikawa Y."/>
            <person name="Matsunawa H."/>
            <person name="Ichihara T."/>
            <person name="Shiohata N."/>
            <person name="Sano S."/>
            <person name="Moriya S."/>
            <person name="Momiyama H."/>
            <person name="Satoh N."/>
            <person name="Takami S."/>
            <person name="Terashima Y."/>
            <person name="Suzuki O."/>
            <person name="Nakagawa S."/>
            <person name="Senoh A."/>
            <person name="Mizoguchi H."/>
            <person name="Goto Y."/>
            <person name="Shimizu F."/>
            <person name="Wakebe H."/>
            <person name="Hishigaki H."/>
            <person name="Watanabe T."/>
            <person name="Sugiyama A."/>
            <person name="Takemoto M."/>
            <person name="Kawakami B."/>
            <person name="Yamazaki M."/>
            <person name="Watanabe K."/>
            <person name="Kumagai A."/>
            <person name="Itakura S."/>
            <person name="Fukuzumi Y."/>
            <person name="Fujimori Y."/>
            <person name="Komiyama M."/>
            <person name="Tashiro H."/>
            <person name="Tanigami A."/>
            <person name="Fujiwara T."/>
            <person name="Ono T."/>
            <person name="Yamada K."/>
            <person name="Fujii Y."/>
            <person name="Ozaki K."/>
            <person name="Hirao M."/>
            <person name="Ohmori Y."/>
            <person name="Kawabata A."/>
            <person name="Hikiji T."/>
            <person name="Kobatake N."/>
            <person name="Inagaki H."/>
            <person name="Ikema Y."/>
            <person name="Okamoto S."/>
            <person name="Okitani R."/>
            <person name="Kawakami T."/>
            <person name="Noguchi S."/>
            <person name="Itoh T."/>
            <person name="Shigeta K."/>
            <person name="Senba T."/>
            <person name="Matsumura K."/>
            <person name="Nakajima Y."/>
            <person name="Mizuno T."/>
            <person name="Morinaga M."/>
            <person name="Sasaki M."/>
            <person name="Togashi T."/>
            <person name="Oyama M."/>
            <person name="Hata H."/>
            <person name="Watanabe M."/>
            <person name="Komatsu T."/>
            <person name="Mizushima-Sugano J."/>
            <person name="Satoh T."/>
            <person name="Shirai Y."/>
            <person name="Takahashi Y."/>
            <person name="Nakagawa K."/>
            <person name="Okumura K."/>
            <person name="Nagase T."/>
            <person name="Nomura N."/>
            <person name="Kikuchi H."/>
            <person name="Masuho Y."/>
            <person name="Yamashita R."/>
            <person name="Nakai K."/>
            <person name="Yada T."/>
            <person name="Nakamura Y."/>
            <person name="Ohara O."/>
            <person name="Isogai T."/>
            <person name="Sugano S."/>
        </authorList>
    </citation>
    <scope>NUCLEOTIDE SEQUENCE [LARGE SCALE MRNA] (ISOFORM 2)</scope>
    <source>
        <tissue>Placenta</tissue>
    </source>
</reference>
<reference key="6">
    <citation type="journal article" date="2005" name="Nature">
        <title>The DNA sequence of the human X chromosome.</title>
        <authorList>
            <person name="Ross M.T."/>
            <person name="Grafham D.V."/>
            <person name="Coffey A.J."/>
            <person name="Scherer S."/>
            <person name="McLay K."/>
            <person name="Muzny D."/>
            <person name="Platzer M."/>
            <person name="Howell G.R."/>
            <person name="Burrows C."/>
            <person name="Bird C.P."/>
            <person name="Frankish A."/>
            <person name="Lovell F.L."/>
            <person name="Howe K.L."/>
            <person name="Ashurst J.L."/>
            <person name="Fulton R.S."/>
            <person name="Sudbrak R."/>
            <person name="Wen G."/>
            <person name="Jones M.C."/>
            <person name="Hurles M.E."/>
            <person name="Andrews T.D."/>
            <person name="Scott C.E."/>
            <person name="Searle S."/>
            <person name="Ramser J."/>
            <person name="Whittaker A."/>
            <person name="Deadman R."/>
            <person name="Carter N.P."/>
            <person name="Hunt S.E."/>
            <person name="Chen R."/>
            <person name="Cree A."/>
            <person name="Gunaratne P."/>
            <person name="Havlak P."/>
            <person name="Hodgson A."/>
            <person name="Metzker M.L."/>
            <person name="Richards S."/>
            <person name="Scott G."/>
            <person name="Steffen D."/>
            <person name="Sodergren E."/>
            <person name="Wheeler D.A."/>
            <person name="Worley K.C."/>
            <person name="Ainscough R."/>
            <person name="Ambrose K.D."/>
            <person name="Ansari-Lari M.A."/>
            <person name="Aradhya S."/>
            <person name="Ashwell R.I."/>
            <person name="Babbage A.K."/>
            <person name="Bagguley C.L."/>
            <person name="Ballabio A."/>
            <person name="Banerjee R."/>
            <person name="Barker G.E."/>
            <person name="Barlow K.F."/>
            <person name="Barrett I.P."/>
            <person name="Bates K.N."/>
            <person name="Beare D.M."/>
            <person name="Beasley H."/>
            <person name="Beasley O."/>
            <person name="Beck A."/>
            <person name="Bethel G."/>
            <person name="Blechschmidt K."/>
            <person name="Brady N."/>
            <person name="Bray-Allen S."/>
            <person name="Bridgeman A.M."/>
            <person name="Brown A.J."/>
            <person name="Brown M.J."/>
            <person name="Bonnin D."/>
            <person name="Bruford E.A."/>
            <person name="Buhay C."/>
            <person name="Burch P."/>
            <person name="Burford D."/>
            <person name="Burgess J."/>
            <person name="Burrill W."/>
            <person name="Burton J."/>
            <person name="Bye J.M."/>
            <person name="Carder C."/>
            <person name="Carrel L."/>
            <person name="Chako J."/>
            <person name="Chapman J.C."/>
            <person name="Chavez D."/>
            <person name="Chen E."/>
            <person name="Chen G."/>
            <person name="Chen Y."/>
            <person name="Chen Z."/>
            <person name="Chinault C."/>
            <person name="Ciccodicola A."/>
            <person name="Clark S.Y."/>
            <person name="Clarke G."/>
            <person name="Clee C.M."/>
            <person name="Clegg S."/>
            <person name="Clerc-Blankenburg K."/>
            <person name="Clifford K."/>
            <person name="Cobley V."/>
            <person name="Cole C.G."/>
            <person name="Conquer J.S."/>
            <person name="Corby N."/>
            <person name="Connor R.E."/>
            <person name="David R."/>
            <person name="Davies J."/>
            <person name="Davis C."/>
            <person name="Davis J."/>
            <person name="Delgado O."/>
            <person name="Deshazo D."/>
            <person name="Dhami P."/>
            <person name="Ding Y."/>
            <person name="Dinh H."/>
            <person name="Dodsworth S."/>
            <person name="Draper H."/>
            <person name="Dugan-Rocha S."/>
            <person name="Dunham A."/>
            <person name="Dunn M."/>
            <person name="Durbin K.J."/>
            <person name="Dutta I."/>
            <person name="Eades T."/>
            <person name="Ellwood M."/>
            <person name="Emery-Cohen A."/>
            <person name="Errington H."/>
            <person name="Evans K.L."/>
            <person name="Faulkner L."/>
            <person name="Francis F."/>
            <person name="Frankland J."/>
            <person name="Fraser A.E."/>
            <person name="Galgoczy P."/>
            <person name="Gilbert J."/>
            <person name="Gill R."/>
            <person name="Gloeckner G."/>
            <person name="Gregory S.G."/>
            <person name="Gribble S."/>
            <person name="Griffiths C."/>
            <person name="Grocock R."/>
            <person name="Gu Y."/>
            <person name="Gwilliam R."/>
            <person name="Hamilton C."/>
            <person name="Hart E.A."/>
            <person name="Hawes A."/>
            <person name="Heath P.D."/>
            <person name="Heitmann K."/>
            <person name="Hennig S."/>
            <person name="Hernandez J."/>
            <person name="Hinzmann B."/>
            <person name="Ho S."/>
            <person name="Hoffs M."/>
            <person name="Howden P.J."/>
            <person name="Huckle E.J."/>
            <person name="Hume J."/>
            <person name="Hunt P.J."/>
            <person name="Hunt A.R."/>
            <person name="Isherwood J."/>
            <person name="Jacob L."/>
            <person name="Johnson D."/>
            <person name="Jones S."/>
            <person name="de Jong P.J."/>
            <person name="Joseph S.S."/>
            <person name="Keenan S."/>
            <person name="Kelly S."/>
            <person name="Kershaw J.K."/>
            <person name="Khan Z."/>
            <person name="Kioschis P."/>
            <person name="Klages S."/>
            <person name="Knights A.J."/>
            <person name="Kosiura A."/>
            <person name="Kovar-Smith C."/>
            <person name="Laird G.K."/>
            <person name="Langford C."/>
            <person name="Lawlor S."/>
            <person name="Leversha M."/>
            <person name="Lewis L."/>
            <person name="Liu W."/>
            <person name="Lloyd C."/>
            <person name="Lloyd D.M."/>
            <person name="Loulseged H."/>
            <person name="Loveland J.E."/>
            <person name="Lovell J.D."/>
            <person name="Lozado R."/>
            <person name="Lu J."/>
            <person name="Lyne R."/>
            <person name="Ma J."/>
            <person name="Maheshwari M."/>
            <person name="Matthews L.H."/>
            <person name="McDowall J."/>
            <person name="McLaren S."/>
            <person name="McMurray A."/>
            <person name="Meidl P."/>
            <person name="Meitinger T."/>
            <person name="Milne S."/>
            <person name="Miner G."/>
            <person name="Mistry S.L."/>
            <person name="Morgan M."/>
            <person name="Morris S."/>
            <person name="Mueller I."/>
            <person name="Mullikin J.C."/>
            <person name="Nguyen N."/>
            <person name="Nordsiek G."/>
            <person name="Nyakatura G."/>
            <person name="O'dell C.N."/>
            <person name="Okwuonu G."/>
            <person name="Palmer S."/>
            <person name="Pandian R."/>
            <person name="Parker D."/>
            <person name="Parrish J."/>
            <person name="Pasternak S."/>
            <person name="Patel D."/>
            <person name="Pearce A.V."/>
            <person name="Pearson D.M."/>
            <person name="Pelan S.E."/>
            <person name="Perez L."/>
            <person name="Porter K.M."/>
            <person name="Ramsey Y."/>
            <person name="Reichwald K."/>
            <person name="Rhodes S."/>
            <person name="Ridler K.A."/>
            <person name="Schlessinger D."/>
            <person name="Schueler M.G."/>
            <person name="Sehra H.K."/>
            <person name="Shaw-Smith C."/>
            <person name="Shen H."/>
            <person name="Sheridan E.M."/>
            <person name="Shownkeen R."/>
            <person name="Skuce C.D."/>
            <person name="Smith M.L."/>
            <person name="Sotheran E.C."/>
            <person name="Steingruber H.E."/>
            <person name="Steward C.A."/>
            <person name="Storey R."/>
            <person name="Swann R.M."/>
            <person name="Swarbreck D."/>
            <person name="Tabor P.E."/>
            <person name="Taudien S."/>
            <person name="Taylor T."/>
            <person name="Teague B."/>
            <person name="Thomas K."/>
            <person name="Thorpe A."/>
            <person name="Timms K."/>
            <person name="Tracey A."/>
            <person name="Trevanion S."/>
            <person name="Tromans A.C."/>
            <person name="d'Urso M."/>
            <person name="Verduzco D."/>
            <person name="Villasana D."/>
            <person name="Waldron L."/>
            <person name="Wall M."/>
            <person name="Wang Q."/>
            <person name="Warren J."/>
            <person name="Warry G.L."/>
            <person name="Wei X."/>
            <person name="West A."/>
            <person name="Whitehead S.L."/>
            <person name="Whiteley M.N."/>
            <person name="Wilkinson J.E."/>
            <person name="Willey D.L."/>
            <person name="Williams G."/>
            <person name="Williams L."/>
            <person name="Williamson A."/>
            <person name="Williamson H."/>
            <person name="Wilming L."/>
            <person name="Woodmansey R.L."/>
            <person name="Wray P.W."/>
            <person name="Yen J."/>
            <person name="Zhang J."/>
            <person name="Zhou J."/>
            <person name="Zoghbi H."/>
            <person name="Zorilla S."/>
            <person name="Buck D."/>
            <person name="Reinhardt R."/>
            <person name="Poustka A."/>
            <person name="Rosenthal A."/>
            <person name="Lehrach H."/>
            <person name="Meindl A."/>
            <person name="Minx P.J."/>
            <person name="Hillier L.W."/>
            <person name="Willard H.F."/>
            <person name="Wilson R.K."/>
            <person name="Waterston R.H."/>
            <person name="Rice C.M."/>
            <person name="Vaudin M."/>
            <person name="Coulson A."/>
            <person name="Nelson D.L."/>
            <person name="Weinstock G."/>
            <person name="Sulston J.E."/>
            <person name="Durbin R.M."/>
            <person name="Hubbard T."/>
            <person name="Gibbs R.A."/>
            <person name="Beck S."/>
            <person name="Rogers J."/>
            <person name="Bentley D.R."/>
        </authorList>
    </citation>
    <scope>NUCLEOTIDE SEQUENCE [LARGE SCALE GENOMIC DNA]</scope>
</reference>
<reference key="7">
    <citation type="submission" date="2005-07" db="EMBL/GenBank/DDBJ databases">
        <authorList>
            <person name="Mural R.J."/>
            <person name="Istrail S."/>
            <person name="Sutton G.G."/>
            <person name="Florea L."/>
            <person name="Halpern A.L."/>
            <person name="Mobarry C.M."/>
            <person name="Lippert R."/>
            <person name="Walenz B."/>
            <person name="Shatkay H."/>
            <person name="Dew I."/>
            <person name="Miller J.R."/>
            <person name="Flanigan M.J."/>
            <person name="Edwards N.J."/>
            <person name="Bolanos R."/>
            <person name="Fasulo D."/>
            <person name="Halldorsson B.V."/>
            <person name="Hannenhalli S."/>
            <person name="Turner R."/>
            <person name="Yooseph S."/>
            <person name="Lu F."/>
            <person name="Nusskern D.R."/>
            <person name="Shue B.C."/>
            <person name="Zheng X.H."/>
            <person name="Zhong F."/>
            <person name="Delcher A.L."/>
            <person name="Huson D.H."/>
            <person name="Kravitz S.A."/>
            <person name="Mouchard L."/>
            <person name="Reinert K."/>
            <person name="Remington K.A."/>
            <person name="Clark A.G."/>
            <person name="Waterman M.S."/>
            <person name="Eichler E.E."/>
            <person name="Adams M.D."/>
            <person name="Hunkapiller M.W."/>
            <person name="Myers E.W."/>
            <person name="Venter J.C."/>
        </authorList>
    </citation>
    <scope>NUCLEOTIDE SEQUENCE [LARGE SCALE GENOMIC DNA]</scope>
</reference>
<reference key="8">
    <citation type="journal article" date="2004" name="Genome Res.">
        <title>The status, quality, and expansion of the NIH full-length cDNA project: the Mammalian Gene Collection (MGC).</title>
        <authorList>
            <consortium name="The MGC Project Team"/>
        </authorList>
    </citation>
    <scope>NUCLEOTIDE SEQUENCE [LARGE SCALE MRNA] (ISOFORM 1)</scope>
    <source>
        <tissue>Lung</tissue>
        <tissue>Skeletal muscle</tissue>
    </source>
</reference>
<reference key="9">
    <citation type="submission" date="2009-03" db="UniProtKB">
        <authorList>
            <person name="Bienvenut W.V."/>
            <person name="Waridel P."/>
            <person name="Quadroni M."/>
        </authorList>
    </citation>
    <scope>PROTEIN SEQUENCE OF 2-13; 77-100; 182-203; 220-227; 262-274; 312-323; 386-397 AND 431-446</scope>
    <scope>CLEAVAGE OF INITIATOR METHIONINE</scope>
    <scope>ACETYLATION AT SER-2</scope>
    <scope>IDENTIFICATION BY MASS SPECTROMETRY</scope>
    <source>
        <tissue>Embryonic kidney</tissue>
    </source>
</reference>
<reference key="10">
    <citation type="submission" date="1999-05" db="EMBL/GenBank/DDBJ databases">
        <title>Isolation of genes which are differentially expressed in prostate cancer cells.</title>
        <authorList>
            <person name="Stubbs A.P."/>
            <person name="Abel P.D."/>
            <person name="Lalani E.-N."/>
            <person name="Stamp G.W.H."/>
        </authorList>
    </citation>
    <scope>NUCLEOTIDE SEQUENCE OF 346-424</scope>
    <source>
        <tissue>Prostatic carcinoma</tissue>
    </source>
</reference>
<reference key="11">
    <citation type="journal article" date="1999" name="Cancer Res.">
        <title>A new MAGE gene with ubiquitous expression does not code for known MAGE antigens recognized by T cells.</title>
        <authorList>
            <person name="Lucas S."/>
            <person name="Brasseur F."/>
            <person name="Boon T."/>
        </authorList>
    </citation>
    <scope>NUCLEOTIDE SEQUENCE OF 369-503</scope>
    <source>
        <tissue>Testis</tissue>
    </source>
</reference>
<reference key="12">
    <citation type="journal article" date="2006" name="Cell">
        <title>Global, in vivo, and site-specific phosphorylation dynamics in signaling networks.</title>
        <authorList>
            <person name="Olsen J.V."/>
            <person name="Blagoev B."/>
            <person name="Gnad F."/>
            <person name="Macek B."/>
            <person name="Kumar C."/>
            <person name="Mortensen P."/>
            <person name="Mann M."/>
        </authorList>
    </citation>
    <scope>PHOSPHORYLATION [LARGE SCALE ANALYSIS] AT SER-247</scope>
    <scope>IDENTIFICATION BY MASS SPECTROMETRY [LARGE SCALE ANALYSIS]</scope>
    <source>
        <tissue>Cervix carcinoma</tissue>
    </source>
</reference>
<reference key="13">
    <citation type="journal article" date="2007" name="J. Proteome Res.">
        <title>Improved titanium dioxide enrichment of phosphopeptides from HeLa cells and high confident phosphopeptide identification by cross-validation of MS/MS and MS/MS/MS spectra.</title>
        <authorList>
            <person name="Yu L.R."/>
            <person name="Zhu Z."/>
            <person name="Chan K.C."/>
            <person name="Issaq H.J."/>
            <person name="Dimitrov D.S."/>
            <person name="Veenstra T.D."/>
        </authorList>
    </citation>
    <scope>PHOSPHORYLATION [LARGE SCALE ANALYSIS] AT SER-247</scope>
    <scope>IDENTIFICATION BY MASS SPECTROMETRY [LARGE SCALE ANALYSIS]</scope>
    <source>
        <tissue>Cervix carcinoma</tissue>
    </source>
</reference>
<reference key="14">
    <citation type="journal article" date="2007" name="Science">
        <title>ATM and ATR substrate analysis reveals extensive protein networks responsive to DNA damage.</title>
        <authorList>
            <person name="Matsuoka S."/>
            <person name="Ballif B.A."/>
            <person name="Smogorzewska A."/>
            <person name="McDonald E.R. III"/>
            <person name="Hurov K.E."/>
            <person name="Luo J."/>
            <person name="Bakalarski C.E."/>
            <person name="Zhao Z."/>
            <person name="Solimini N."/>
            <person name="Lerenthal Y."/>
            <person name="Shiloh Y."/>
            <person name="Gygi S.P."/>
            <person name="Elledge S.J."/>
        </authorList>
    </citation>
    <scope>PHOSPHORYLATION [LARGE SCALE ANALYSIS] AT SER-190; SER-191 AND SER-194</scope>
    <scope>IDENTIFICATION BY MASS SPECTROMETRY [LARGE SCALE ANALYSIS]</scope>
    <source>
        <tissue>Embryonic kidney</tissue>
    </source>
</reference>
<reference key="15">
    <citation type="journal article" date="2008" name="J. Proteome Res.">
        <title>Phosphoproteome of resting human platelets.</title>
        <authorList>
            <person name="Zahedi R.P."/>
            <person name="Lewandrowski U."/>
            <person name="Wiesner J."/>
            <person name="Wortelkamp S."/>
            <person name="Moebius J."/>
            <person name="Schuetz C."/>
            <person name="Walter U."/>
            <person name="Gambaryan S."/>
            <person name="Sickmann A."/>
        </authorList>
    </citation>
    <scope>PHOSPHORYLATION [LARGE SCALE ANALYSIS] AT SER-194</scope>
    <scope>IDENTIFICATION BY MASS SPECTROMETRY [LARGE SCALE ANALYSIS]</scope>
    <source>
        <tissue>Platelet</tissue>
    </source>
</reference>
<reference key="16">
    <citation type="journal article" date="2008" name="Mol. Cell">
        <title>Kinase-selective enrichment enables quantitative phosphoproteomics of the kinome across the cell cycle.</title>
        <authorList>
            <person name="Daub H."/>
            <person name="Olsen J.V."/>
            <person name="Bairlein M."/>
            <person name="Gnad F."/>
            <person name="Oppermann F.S."/>
            <person name="Korner R."/>
            <person name="Greff Z."/>
            <person name="Keri G."/>
            <person name="Stemmann O."/>
            <person name="Mann M."/>
        </authorList>
    </citation>
    <scope>PHOSPHORYLATION [LARGE SCALE ANALYSIS] AT SER-247</scope>
    <scope>IDENTIFICATION BY MASS SPECTROMETRY [LARGE SCALE ANALYSIS]</scope>
    <source>
        <tissue>Cervix carcinoma</tissue>
    </source>
</reference>
<reference key="17">
    <citation type="journal article" date="2008" name="Proc. Natl. Acad. Sci. U.S.A.">
        <title>A quantitative atlas of mitotic phosphorylation.</title>
        <authorList>
            <person name="Dephoure N."/>
            <person name="Zhou C."/>
            <person name="Villen J."/>
            <person name="Beausoleil S.A."/>
            <person name="Bakalarski C.E."/>
            <person name="Elledge S.J."/>
            <person name="Gygi S.P."/>
        </authorList>
    </citation>
    <scope>PHOSPHORYLATION [LARGE SCALE ANALYSIS] AT SER-157; SER-190; SER-191; SER-194; SER-197; SER-247 AND SER-265</scope>
    <scope>IDENTIFICATION BY MASS SPECTROMETRY [LARGE SCALE ANALYSIS]</scope>
    <source>
        <tissue>Cervix carcinoma</tissue>
    </source>
</reference>
<reference key="18">
    <citation type="journal article" date="2009" name="Anal. Chem.">
        <title>Lys-N and trypsin cover complementary parts of the phosphoproteome in a refined SCX-based approach.</title>
        <authorList>
            <person name="Gauci S."/>
            <person name="Helbig A.O."/>
            <person name="Slijper M."/>
            <person name="Krijgsveld J."/>
            <person name="Heck A.J."/>
            <person name="Mohammed S."/>
        </authorList>
    </citation>
    <scope>ACETYLATION [LARGE SCALE ANALYSIS] AT SER-2</scope>
    <scope>CLEAVAGE OF INITIATOR METHIONINE [LARGE SCALE ANALYSIS]</scope>
    <scope>IDENTIFICATION BY MASS SPECTROMETRY [LARGE SCALE ANALYSIS]</scope>
</reference>
<reference key="19">
    <citation type="journal article" date="2009" name="Mol. Cell. Proteomics">
        <title>Large-scale proteomics analysis of the human kinome.</title>
        <authorList>
            <person name="Oppermann F.S."/>
            <person name="Gnad F."/>
            <person name="Olsen J.V."/>
            <person name="Hornberger R."/>
            <person name="Greff Z."/>
            <person name="Keri G."/>
            <person name="Mann M."/>
            <person name="Daub H."/>
        </authorList>
    </citation>
    <scope>PHOSPHORYLATION [LARGE SCALE ANALYSIS] AT SER-247</scope>
    <scope>IDENTIFICATION BY MASS SPECTROMETRY [LARGE SCALE ANALYSIS]</scope>
</reference>
<reference key="20">
    <citation type="journal article" date="2010" name="Sci. Signal.">
        <title>Quantitative phosphoproteomics reveals widespread full phosphorylation site occupancy during mitosis.</title>
        <authorList>
            <person name="Olsen J.V."/>
            <person name="Vermeulen M."/>
            <person name="Santamaria A."/>
            <person name="Kumar C."/>
            <person name="Miller M.L."/>
            <person name="Jensen L.J."/>
            <person name="Gnad F."/>
            <person name="Cox J."/>
            <person name="Jensen T.S."/>
            <person name="Nigg E.A."/>
            <person name="Brunak S."/>
            <person name="Mann M."/>
        </authorList>
    </citation>
    <scope>ACETYLATION [LARGE SCALE ANALYSIS] AT SER-2</scope>
    <scope>PHOSPHORYLATION [LARGE SCALE ANALYSIS] AT SER-5; THR-72; SER-191; SER-244; SER-247 AND SER-265</scope>
    <scope>CLEAVAGE OF INITIATOR METHIONINE [LARGE SCALE ANALYSIS]</scope>
    <scope>IDENTIFICATION BY MASS SPECTROMETRY [LARGE SCALE ANALYSIS]</scope>
    <source>
        <tissue>Cervix carcinoma</tissue>
    </source>
</reference>
<reference key="21">
    <citation type="journal article" date="2011" name="BMC Syst. Biol.">
        <title>Initial characterization of the human central proteome.</title>
        <authorList>
            <person name="Burkard T.R."/>
            <person name="Planyavsky M."/>
            <person name="Kaupe I."/>
            <person name="Breitwieser F.P."/>
            <person name="Buerckstuemmer T."/>
            <person name="Bennett K.L."/>
            <person name="Superti-Furga G."/>
            <person name="Colinge J."/>
        </authorList>
    </citation>
    <scope>IDENTIFICATION BY MASS SPECTROMETRY [LARGE SCALE ANALYSIS]</scope>
</reference>
<reference key="22">
    <citation type="journal article" date="2011" name="Sci. Signal.">
        <title>System-wide temporal characterization of the proteome and phosphoproteome of human embryonic stem cell differentiation.</title>
        <authorList>
            <person name="Rigbolt K.T."/>
            <person name="Prokhorova T.A."/>
            <person name="Akimov V."/>
            <person name="Henningsen J."/>
            <person name="Johansen P.T."/>
            <person name="Kratchmarova I."/>
            <person name="Kassem M."/>
            <person name="Mann M."/>
            <person name="Olsen J.V."/>
            <person name="Blagoev B."/>
        </authorList>
    </citation>
    <scope>ACETYLATION [LARGE SCALE ANALYSIS] AT SER-2</scope>
    <scope>PHOSPHORYLATION [LARGE SCALE ANALYSIS] AT SER-247</scope>
    <scope>CLEAVAGE OF INITIATOR METHIONINE [LARGE SCALE ANALYSIS]</scope>
    <scope>IDENTIFICATION BY MASS SPECTROMETRY [LARGE SCALE ANALYSIS]</scope>
</reference>
<reference key="23">
    <citation type="journal article" date="2012" name="Mol. Cell. Proteomics">
        <title>Comparative large-scale characterisation of plant vs. mammal proteins reveals similar and idiosyncratic N-alpha acetylation features.</title>
        <authorList>
            <person name="Bienvenut W.V."/>
            <person name="Sumpton D."/>
            <person name="Martinez A."/>
            <person name="Lilla S."/>
            <person name="Espagne C."/>
            <person name="Meinnel T."/>
            <person name="Giglione C."/>
        </authorList>
    </citation>
    <scope>ACETYLATION [LARGE SCALE ANALYSIS] AT SER-2</scope>
    <scope>CLEAVAGE OF INITIATOR METHIONINE [LARGE SCALE ANALYSIS]</scope>
    <scope>IDENTIFICATION BY MASS SPECTROMETRY [LARGE SCALE ANALYSIS]</scope>
</reference>
<reference key="24">
    <citation type="journal article" date="2012" name="Proc. Natl. Acad. Sci. U.S.A.">
        <title>N-terminal acetylome analyses and functional insights of the N-terminal acetyltransferase NatB.</title>
        <authorList>
            <person name="Van Damme P."/>
            <person name="Lasa M."/>
            <person name="Polevoda B."/>
            <person name="Gazquez C."/>
            <person name="Elosegui-Artola A."/>
            <person name="Kim D.S."/>
            <person name="De Juan-Pardo E."/>
            <person name="Demeyer K."/>
            <person name="Hole K."/>
            <person name="Larrea E."/>
            <person name="Timmerman E."/>
            <person name="Prieto J."/>
            <person name="Arnesen T."/>
            <person name="Sherman F."/>
            <person name="Gevaert K."/>
            <person name="Aldabe R."/>
        </authorList>
    </citation>
    <scope>ACETYLATION [LARGE SCALE ANALYSIS] AT SER-2</scope>
    <scope>CLEAVAGE OF INITIATOR METHIONINE [LARGE SCALE ANALYSIS]</scope>
    <scope>IDENTIFICATION BY MASS SPECTROMETRY [LARGE SCALE ANALYSIS]</scope>
</reference>
<reference key="25">
    <citation type="journal article" date="2013" name="J. Proteome Res.">
        <title>Toward a comprehensive characterization of a human cancer cell phosphoproteome.</title>
        <authorList>
            <person name="Zhou H."/>
            <person name="Di Palma S."/>
            <person name="Preisinger C."/>
            <person name="Peng M."/>
            <person name="Polat A.N."/>
            <person name="Heck A.J."/>
            <person name="Mohammed S."/>
        </authorList>
    </citation>
    <scope>PHOSPHORYLATION [LARGE SCALE ANALYSIS] AT SER-247; SER-264 AND SER-265</scope>
    <scope>IDENTIFICATION BY MASS SPECTROMETRY [LARGE SCALE ANALYSIS]</scope>
    <source>
        <tissue>Cervix carcinoma</tissue>
        <tissue>Erythroleukemia</tissue>
    </source>
</reference>
<reference key="26">
    <citation type="journal article" date="2016" name="N. Engl. J. Med.">
        <title>Polyhydramnios, transient antenatal Bartter's syndrome, and MAGED2 mutations.</title>
        <authorList>
            <person name="Laghmani K."/>
            <person name="Beck B.B."/>
            <person name="Yang S.S."/>
            <person name="Seaayfan E."/>
            <person name="Wenzel A."/>
            <person name="Reusch B."/>
            <person name="Vitzthum H."/>
            <person name="Priem D."/>
            <person name="Demaretz S."/>
            <person name="Bergmann K."/>
            <person name="Duin L.K."/>
            <person name="Goebel H."/>
            <person name="Mache C."/>
            <person name="Thiele H."/>
            <person name="Bartram M.P."/>
            <person name="Dombret C."/>
            <person name="Altmueller J."/>
            <person name="Nuernberg P."/>
            <person name="Benzing T."/>
            <person name="Levtchenko E."/>
            <person name="Seyberth H.W."/>
            <person name="Klaus G."/>
            <person name="Yigit G."/>
            <person name="Lin S.H."/>
            <person name="Timmer A."/>
            <person name="de Koning T.J."/>
            <person name="Scherjon S.A."/>
            <person name="Schlingmann K.P."/>
            <person name="Bertrand M.J."/>
            <person name="Rinschen M.M."/>
            <person name="de Backer O."/>
            <person name="Konrad M."/>
            <person name="Koemhoff M."/>
        </authorList>
    </citation>
    <scope>FUNCTION</scope>
    <scope>INTERACTION WITH GNAS AND DNAJB1</scope>
    <scope>TISSUE SPECIFICITY</scope>
    <scope>INVOLVEMENT IN BARTS5</scope>
    <scope>VARIANTS BARTS5 CYS-446 AND 488-GLU--ALA-491 DEL</scope>
    <scope>CHARACTERIZATION OF VARIANT BARTS5 CYS-446</scope>
</reference>
<reference key="27">
    <citation type="journal article" date="2006" name="Science">
        <title>The consensus coding sequences of human breast and colorectal cancers.</title>
        <authorList>
            <person name="Sjoeblom T."/>
            <person name="Jones S."/>
            <person name="Wood L.D."/>
            <person name="Parsons D.W."/>
            <person name="Lin J."/>
            <person name="Barber T.D."/>
            <person name="Mandelker D."/>
            <person name="Leary R.J."/>
            <person name="Ptak J."/>
            <person name="Silliman N."/>
            <person name="Szabo S."/>
            <person name="Buckhaults P."/>
            <person name="Farrell C."/>
            <person name="Meeh P."/>
            <person name="Markowitz S.D."/>
            <person name="Willis J."/>
            <person name="Dawson D."/>
            <person name="Willson J.K.V."/>
            <person name="Gazdar A.F."/>
            <person name="Hartigan J."/>
            <person name="Wu L."/>
            <person name="Liu C."/>
            <person name="Parmigiani G."/>
            <person name="Park B.H."/>
            <person name="Bachman K.E."/>
            <person name="Papadopoulos N."/>
            <person name="Vogelstein B."/>
            <person name="Kinzler K.W."/>
            <person name="Velculescu V.E."/>
        </authorList>
    </citation>
    <scope>VARIANT [LARGE SCALE ANALYSIS] GLN-458</scope>
</reference>
<organism>
    <name type="scientific">Homo sapiens</name>
    <name type="common">Human</name>
    <dbReference type="NCBI Taxonomy" id="9606"/>
    <lineage>
        <taxon>Eukaryota</taxon>
        <taxon>Metazoa</taxon>
        <taxon>Chordata</taxon>
        <taxon>Craniata</taxon>
        <taxon>Vertebrata</taxon>
        <taxon>Euteleostomi</taxon>
        <taxon>Mammalia</taxon>
        <taxon>Eutheria</taxon>
        <taxon>Euarchontoglires</taxon>
        <taxon>Primates</taxon>
        <taxon>Haplorrhini</taxon>
        <taxon>Catarrhini</taxon>
        <taxon>Hominidae</taxon>
        <taxon>Homo</taxon>
    </lineage>
</organism>
<feature type="initiator methionine" description="Removed" evidence="7 17 18 19 20 21">
    <location>
        <position position="1"/>
    </location>
</feature>
<feature type="chain" id="PRO_0000156727" description="Melanoma-associated antigen D2">
    <location>
        <begin position="2"/>
        <end position="606"/>
    </location>
</feature>
<feature type="domain" description="MAGE" evidence="1">
    <location>
        <begin position="279"/>
        <end position="478"/>
    </location>
</feature>
<feature type="region of interest" description="Disordered" evidence="2">
    <location>
        <begin position="1"/>
        <end position="204"/>
    </location>
</feature>
<feature type="region of interest" description="Disordered" evidence="2">
    <location>
        <begin position="248"/>
        <end position="275"/>
    </location>
</feature>
<feature type="region of interest" description="Disordered" evidence="2">
    <location>
        <begin position="534"/>
        <end position="563"/>
    </location>
</feature>
<feature type="compositionally biased region" description="Polar residues" evidence="2">
    <location>
        <begin position="24"/>
        <end position="37"/>
    </location>
</feature>
<feature type="compositionally biased region" description="Polar residues" evidence="2">
    <location>
        <begin position="81"/>
        <end position="93"/>
    </location>
</feature>
<feature type="compositionally biased region" description="Basic and acidic residues" evidence="2">
    <location>
        <begin position="122"/>
        <end position="131"/>
    </location>
</feature>
<feature type="compositionally biased region" description="Low complexity" evidence="2">
    <location>
        <begin position="142"/>
        <end position="164"/>
    </location>
</feature>
<feature type="compositionally biased region" description="Basic residues" evidence="2">
    <location>
        <begin position="171"/>
        <end position="181"/>
    </location>
</feature>
<feature type="compositionally biased region" description="Basic residues" evidence="2">
    <location>
        <begin position="248"/>
        <end position="260"/>
    </location>
</feature>
<feature type="modified residue" description="N-acetylserine" evidence="7 17 18 19 20 21">
    <location>
        <position position="2"/>
    </location>
</feature>
<feature type="modified residue" description="Phosphoserine" evidence="18">
    <location>
        <position position="5"/>
    </location>
</feature>
<feature type="modified residue" description="Phosphothreonine" evidence="18">
    <location>
        <position position="72"/>
    </location>
</feature>
<feature type="modified residue" description="Phosphoserine" evidence="14">
    <location>
        <position position="157"/>
    </location>
</feature>
<feature type="modified residue" description="Phosphoserine" evidence="11 14">
    <location>
        <position position="190"/>
    </location>
</feature>
<feature type="modified residue" description="Phosphoserine" evidence="11 14 18">
    <location>
        <position position="191"/>
    </location>
</feature>
<feature type="modified residue" description="Phosphoserine" evidence="11 13 14">
    <location>
        <position position="194"/>
    </location>
</feature>
<feature type="modified residue" description="Phosphoserine" evidence="14">
    <location>
        <position position="197"/>
    </location>
</feature>
<feature type="modified residue" description="Phosphoserine" evidence="18">
    <location>
        <position position="244"/>
    </location>
</feature>
<feature type="modified residue" description="Phosphoserine" evidence="10 12 14 15 16 18 19 22">
    <location>
        <position position="247"/>
    </location>
</feature>
<feature type="modified residue" description="Phosphoserine" evidence="22">
    <location>
        <position position="264"/>
    </location>
</feature>
<feature type="modified residue" description="Phosphoserine" evidence="14 18 22">
    <location>
        <position position="265"/>
    </location>
</feature>
<feature type="splice variant" id="VSP_008030" description="In isoform 2." evidence="8">
    <location>
        <begin position="45"/>
        <end position="62"/>
    </location>
</feature>
<feature type="sequence variant" id="VAR_053508" description="In dbSNP:rs12014977.">
    <original>E</original>
    <variation>D</variation>
    <location>
        <position position="187"/>
    </location>
</feature>
<feature type="sequence variant" id="VAR_011639" description="In dbSNP:rs1021000890." evidence="3">
    <original>Q</original>
    <variation>R</variation>
    <location>
        <position position="266"/>
    </location>
</feature>
<feature type="sequence variant" id="VAR_076836" description="In BARTS5; loss of interaction with GNAS; dbSNP:rs878854407." evidence="6">
    <original>R</original>
    <variation>C</variation>
    <location>
        <position position="446"/>
    </location>
</feature>
<feature type="sequence variant" id="VAR_036584" description="In a breast cancer sample; somatic mutation." evidence="5">
    <original>K</original>
    <variation>Q</variation>
    <location>
        <position position="458"/>
    </location>
</feature>
<feature type="sequence variant" id="VAR_076837" description="In BARTS5." evidence="6">
    <location>
        <begin position="488"/>
        <end position="491"/>
    </location>
</feature>
<feature type="sequence conflict" description="In Ref. 3; AAD00728." evidence="9" ref="3">
    <original>P</original>
    <variation>S</variation>
    <location>
        <position position="73"/>
    </location>
</feature>
<feature type="sequence conflict" description="In Ref. 5; BAC03896." evidence="9" ref="5">
    <original>S</original>
    <variation>C</variation>
    <location>
        <position position="377"/>
    </location>
</feature>
<keyword id="KW-0007">Acetylation</keyword>
<keyword id="KW-0025">Alternative splicing</keyword>
<keyword id="KW-0910">Bartter syndrome</keyword>
<keyword id="KW-0903">Direct protein sequencing</keyword>
<keyword id="KW-0225">Disease variant</keyword>
<keyword id="KW-0597">Phosphoprotein</keyword>
<keyword id="KW-1267">Proteomics identification</keyword>
<keyword id="KW-1185">Reference proteome</keyword>
<keyword id="KW-0825">Tumor antigen</keyword>
<comment type="function">
    <text evidence="6">Regulates the expression, localization to the plasma membrane and function of the sodium chloride cotransporters SLC12A1 and SLC12A3, two key components of salt reabsorption in the distal renal tubule.</text>
</comment>
<comment type="subunit">
    <text evidence="6">Interacts with GNAS. May interact with DNAJB1.</text>
</comment>
<comment type="interaction">
    <interactant intactId="EBI-725832">
        <id>Q9UNF1</id>
    </interactant>
    <interactant intactId="EBI-518246">
        <id>P52333</id>
        <label>JAK3</label>
    </interactant>
    <organismsDiffer>false</organismsDiffer>
    <experiments>4</experiments>
</comment>
<comment type="alternative products">
    <event type="alternative splicing"/>
    <isoform>
        <id>Q9UNF1-1</id>
        <name>1</name>
        <sequence type="displayed"/>
    </isoform>
    <isoform>
        <id>Q9UNF1-2</id>
        <name>2</name>
        <sequence type="described" ref="VSP_008030"/>
    </isoform>
</comment>
<comment type="tissue specificity">
    <text evidence="4 6">Widely expressed. In the developing and adult kidney, expressed in the thick ascending limb of the loop of Henle and the distal convoluted tubules outside the loop.</text>
</comment>
<comment type="disease" evidence="6">
    <disease id="DI-04715">
        <name>Bartter syndrome 5, antenatal, transient</name>
        <acronym>BARTS5</acronym>
        <description>An X-linked recessive form of Bartter syndrome, a disorder characterized by impaired salt reabsorption in the thick ascending loop of Henle with pronounced salt wasting, hypokalemic metabolic alkalosis, and varying degrees of hypercalciuria. BARTS5 is an antenatal form beginning in utero with marked fetal polyuria that leads to polyhydramnios and premature delivery. It is characterized by severe but transient symptoms that can resolve with age.</description>
        <dbReference type="MIM" id="300971"/>
    </disease>
    <text>The disease is caused by variants affecting the gene represented in this entry.</text>
</comment>